<proteinExistence type="inferred from homology"/>
<comment type="similarity">
    <text evidence="1">Belongs to the universal ribosomal protein uS9 family.</text>
</comment>
<evidence type="ECO:0000255" key="1">
    <source>
        <dbReference type="HAMAP-Rule" id="MF_00532"/>
    </source>
</evidence>
<evidence type="ECO:0000305" key="2"/>
<dbReference type="EMBL" id="CP000471">
    <property type="protein sequence ID" value="ABK42774.1"/>
    <property type="molecule type" value="Genomic_DNA"/>
</dbReference>
<dbReference type="RefSeq" id="WP_011711946.1">
    <property type="nucleotide sequence ID" value="NC_008576.1"/>
</dbReference>
<dbReference type="SMR" id="A0L481"/>
<dbReference type="STRING" id="156889.Mmc1_0247"/>
<dbReference type="KEGG" id="mgm:Mmc1_0247"/>
<dbReference type="eggNOG" id="COG0103">
    <property type="taxonomic scope" value="Bacteria"/>
</dbReference>
<dbReference type="HOGENOM" id="CLU_046483_2_1_5"/>
<dbReference type="OrthoDB" id="9803965at2"/>
<dbReference type="Proteomes" id="UP000002586">
    <property type="component" value="Chromosome"/>
</dbReference>
<dbReference type="GO" id="GO:0022627">
    <property type="term" value="C:cytosolic small ribosomal subunit"/>
    <property type="evidence" value="ECO:0007669"/>
    <property type="project" value="TreeGrafter"/>
</dbReference>
<dbReference type="GO" id="GO:0003723">
    <property type="term" value="F:RNA binding"/>
    <property type="evidence" value="ECO:0007669"/>
    <property type="project" value="TreeGrafter"/>
</dbReference>
<dbReference type="GO" id="GO:0003735">
    <property type="term" value="F:structural constituent of ribosome"/>
    <property type="evidence" value="ECO:0007669"/>
    <property type="project" value="InterPro"/>
</dbReference>
<dbReference type="GO" id="GO:0006412">
    <property type="term" value="P:translation"/>
    <property type="evidence" value="ECO:0007669"/>
    <property type="project" value="UniProtKB-UniRule"/>
</dbReference>
<dbReference type="FunFam" id="3.30.230.10:FF:000001">
    <property type="entry name" value="30S ribosomal protein S9"/>
    <property type="match status" value="1"/>
</dbReference>
<dbReference type="Gene3D" id="3.30.230.10">
    <property type="match status" value="1"/>
</dbReference>
<dbReference type="HAMAP" id="MF_00532_B">
    <property type="entry name" value="Ribosomal_uS9_B"/>
    <property type="match status" value="1"/>
</dbReference>
<dbReference type="InterPro" id="IPR020568">
    <property type="entry name" value="Ribosomal_Su5_D2-typ_SF"/>
</dbReference>
<dbReference type="InterPro" id="IPR000754">
    <property type="entry name" value="Ribosomal_uS9"/>
</dbReference>
<dbReference type="InterPro" id="IPR023035">
    <property type="entry name" value="Ribosomal_uS9_bac/plastid"/>
</dbReference>
<dbReference type="InterPro" id="IPR020574">
    <property type="entry name" value="Ribosomal_uS9_CS"/>
</dbReference>
<dbReference type="InterPro" id="IPR014721">
    <property type="entry name" value="Ribsml_uS5_D2-typ_fold_subgr"/>
</dbReference>
<dbReference type="NCBIfam" id="NF001099">
    <property type="entry name" value="PRK00132.1"/>
    <property type="match status" value="1"/>
</dbReference>
<dbReference type="PANTHER" id="PTHR21569">
    <property type="entry name" value="RIBOSOMAL PROTEIN S9"/>
    <property type="match status" value="1"/>
</dbReference>
<dbReference type="PANTHER" id="PTHR21569:SF1">
    <property type="entry name" value="SMALL RIBOSOMAL SUBUNIT PROTEIN US9M"/>
    <property type="match status" value="1"/>
</dbReference>
<dbReference type="Pfam" id="PF00380">
    <property type="entry name" value="Ribosomal_S9"/>
    <property type="match status" value="1"/>
</dbReference>
<dbReference type="SUPFAM" id="SSF54211">
    <property type="entry name" value="Ribosomal protein S5 domain 2-like"/>
    <property type="match status" value="1"/>
</dbReference>
<dbReference type="PROSITE" id="PS00360">
    <property type="entry name" value="RIBOSOMAL_S9"/>
    <property type="match status" value="1"/>
</dbReference>
<accession>A0L481</accession>
<gene>
    <name evidence="1" type="primary">rpsI</name>
    <name type="ordered locus">Mmc1_0247</name>
</gene>
<protein>
    <recommendedName>
        <fullName evidence="1">Small ribosomal subunit protein uS9</fullName>
    </recommendedName>
    <alternativeName>
        <fullName evidence="2">30S ribosomal protein S9</fullName>
    </alternativeName>
</protein>
<organism>
    <name type="scientific">Magnetococcus marinus (strain ATCC BAA-1437 / JCM 17883 / MC-1)</name>
    <dbReference type="NCBI Taxonomy" id="156889"/>
    <lineage>
        <taxon>Bacteria</taxon>
        <taxon>Pseudomonadati</taxon>
        <taxon>Pseudomonadota</taxon>
        <taxon>Alphaproteobacteria</taxon>
        <taxon>Magnetococcales</taxon>
        <taxon>Magnetococcaceae</taxon>
        <taxon>Magnetococcus</taxon>
    </lineage>
</organism>
<reference key="1">
    <citation type="journal article" date="2009" name="Appl. Environ. Microbiol.">
        <title>Complete genome sequence of the chemolithoautotrophic marine magnetotactic coccus strain MC-1.</title>
        <authorList>
            <person name="Schubbe S."/>
            <person name="Williams T.J."/>
            <person name="Xie G."/>
            <person name="Kiss H.E."/>
            <person name="Brettin T.S."/>
            <person name="Martinez D."/>
            <person name="Ross C.A."/>
            <person name="Schuler D."/>
            <person name="Cox B.L."/>
            <person name="Nealson K.H."/>
            <person name="Bazylinski D.A."/>
        </authorList>
    </citation>
    <scope>NUCLEOTIDE SEQUENCE [LARGE SCALE GENOMIC DNA]</scope>
    <source>
        <strain>ATCC BAA-1437 / JCM 17883 / MC-1</strain>
    </source>
</reference>
<name>RS9_MAGMM</name>
<sequence length="130" mass="14445">MAQETFNATGKRKESVARVRIVPGSGKVTINQKPMDVYFGRPVLRMVVNQPFSVTEMENKFDVLVNVHGGGVSGQAGAIKHGISKALVDYDEALRPALKKAGFLTRDARTVERKKYGRHKARKSTQFSKR</sequence>
<feature type="chain" id="PRO_1000051248" description="Small ribosomal subunit protein uS9">
    <location>
        <begin position="1"/>
        <end position="130"/>
    </location>
</feature>
<keyword id="KW-1185">Reference proteome</keyword>
<keyword id="KW-0687">Ribonucleoprotein</keyword>
<keyword id="KW-0689">Ribosomal protein</keyword>